<sequence>MKLKGFLAVGVSVFGFSGLLMACSVVSQFDQVDDGKIKLASSLTSKRAAEALETVVKKYNDTKDPGDYPIEIVQIAGGYDGGKKDVQTKVSTKDKNNFYNLILNYPEIVSTLSRSKMALNFDGVNVDKLHPNFLSFNSRIGGIRDDGIYAIPISMSTDLMVINGPVLHYILNSARKEGTPTSTTVQATVSSRSAEKKGTLEIANDSETTKLWQNIQTTAQNNSNETTKEQKQVKRSSSSSSTTSTTGETKDTTKSDNKIKEFWGEYQEVDGGLKNFTFKASIFENWNETLDFATRIANSFPEKVKNITNKTGLDLQGVLGVDSSSNALYAAVFAAGQANYDNFFFNIDKRTGYADYSNFLNKDSSYQNLESVYNDFYKLIQANGLFVNRGGSYSSNFEKFHQLAFSVSSSGGYSYYFAKDNAKRLKFSNYAIEYPSFTQTIQAPNSSETESNLLGTFKLSEKDINLYKGSIPSGKQQGVDAILISNPNLINILEQAKQKNTAQGSESTTNKIIGYTTTANVNVDNQNIFSVSKLNNEQFQRKIIVNATEETLDQSQTLQSNESIVLPMPGKYKSTDKNKVMITQGPNLIGIHANEKENIETKKFVNWFLNQSITDWNSNNQQKNSDQTTKTAAEYFTDQASYILPLKEKFNKSSDLELKGSSSSSNLTTSSASASLLISNNSSTASSPAPKKTNNNSNTFTAKALELFQQAANNEIIPFSDPSDFRNGTFRNNISSSFNAAVNSKVSFNQFVQNFINSLGSGFRR</sequence>
<proteinExistence type="inferred from homology"/>
<accession>P47502</accession>
<dbReference type="EMBL" id="L43967">
    <property type="protein sequence ID" value="AAC71481.1"/>
    <property type="molecule type" value="Genomic_DNA"/>
</dbReference>
<dbReference type="PIR" id="G64228">
    <property type="entry name" value="G64228"/>
</dbReference>
<dbReference type="RefSeq" id="WP_009885795.1">
    <property type="nucleotide sequence ID" value="NC_000908.2"/>
</dbReference>
<dbReference type="STRING" id="243273.MG_260"/>
<dbReference type="GeneID" id="88282409"/>
<dbReference type="KEGG" id="mge:MG_260"/>
<dbReference type="eggNOG" id="COG1653">
    <property type="taxonomic scope" value="Bacteria"/>
</dbReference>
<dbReference type="HOGENOM" id="CLU_017227_1_0_14"/>
<dbReference type="InParanoid" id="P47502"/>
<dbReference type="OrthoDB" id="393769at2"/>
<dbReference type="BioCyc" id="MGEN243273:G1GJ2-310-MONOMER"/>
<dbReference type="Proteomes" id="UP000000807">
    <property type="component" value="Chromosome"/>
</dbReference>
<dbReference type="GO" id="GO:0005886">
    <property type="term" value="C:plasma membrane"/>
    <property type="evidence" value="ECO:0007669"/>
    <property type="project" value="UniProtKB-SubCell"/>
</dbReference>
<dbReference type="InterPro" id="IPR004890">
    <property type="entry name" value="Lipoprotein_10_C"/>
</dbReference>
<dbReference type="InterPro" id="IPR004984">
    <property type="entry name" value="Mycoplasma_lipoprotein_cen_dom"/>
</dbReference>
<dbReference type="InterPro" id="IPR054825">
    <property type="entry name" value="P68-like"/>
</dbReference>
<dbReference type="NCBIfam" id="NF045826">
    <property type="entry name" value="lipo_P68"/>
    <property type="match status" value="1"/>
</dbReference>
<dbReference type="Pfam" id="PF03202">
    <property type="entry name" value="Lipoprotein_10"/>
    <property type="match status" value="1"/>
</dbReference>
<dbReference type="Pfam" id="PF03305">
    <property type="entry name" value="Lipoprotein_X"/>
    <property type="match status" value="1"/>
</dbReference>
<dbReference type="PROSITE" id="PS51257">
    <property type="entry name" value="PROKAR_LIPOPROTEIN"/>
    <property type="match status" value="1"/>
</dbReference>
<gene>
    <name type="ordered locus">MG260</name>
</gene>
<keyword id="KW-1003">Cell membrane</keyword>
<keyword id="KW-0449">Lipoprotein</keyword>
<keyword id="KW-0472">Membrane</keyword>
<keyword id="KW-0564">Palmitate</keyword>
<keyword id="KW-1185">Reference proteome</keyword>
<keyword id="KW-0732">Signal</keyword>
<evidence type="ECO:0000255" key="1">
    <source>
        <dbReference type="PROSITE-ProRule" id="PRU00303"/>
    </source>
</evidence>
<evidence type="ECO:0000256" key="2">
    <source>
        <dbReference type="SAM" id="MobiDB-lite"/>
    </source>
</evidence>
<evidence type="ECO:0000305" key="3"/>
<organism>
    <name type="scientific">Mycoplasma genitalium (strain ATCC 33530 / DSM 19775 / NCTC 10195 / G37)</name>
    <name type="common">Mycoplasmoides genitalium</name>
    <dbReference type="NCBI Taxonomy" id="243273"/>
    <lineage>
        <taxon>Bacteria</taxon>
        <taxon>Bacillati</taxon>
        <taxon>Mycoplasmatota</taxon>
        <taxon>Mycoplasmoidales</taxon>
        <taxon>Mycoplasmoidaceae</taxon>
        <taxon>Mycoplasmoides</taxon>
    </lineage>
</organism>
<protein>
    <recommendedName>
        <fullName>Uncharacterized lipoprotein MG260</fullName>
    </recommendedName>
</protein>
<comment type="subcellular location">
    <subcellularLocation>
        <location evidence="1">Cell membrane</location>
        <topology evidence="1">Lipid-anchor</topology>
    </subcellularLocation>
</comment>
<comment type="similarity">
    <text evidence="3">Belongs to the MG185/MG260 family.</text>
</comment>
<reference key="1">
    <citation type="journal article" date="1995" name="Science">
        <title>The minimal gene complement of Mycoplasma genitalium.</title>
        <authorList>
            <person name="Fraser C.M."/>
            <person name="Gocayne J.D."/>
            <person name="White O."/>
            <person name="Adams M.D."/>
            <person name="Clayton R.A."/>
            <person name="Fleischmann R.D."/>
            <person name="Bult C.J."/>
            <person name="Kerlavage A.R."/>
            <person name="Sutton G.G."/>
            <person name="Kelley J.M."/>
            <person name="Fritchman J.L."/>
            <person name="Weidman J.F."/>
            <person name="Small K.V."/>
            <person name="Sandusky M."/>
            <person name="Fuhrmann J.L."/>
            <person name="Nguyen D.T."/>
            <person name="Utterback T.R."/>
            <person name="Saudek D.M."/>
            <person name="Phillips C.A."/>
            <person name="Merrick J.M."/>
            <person name="Tomb J.-F."/>
            <person name="Dougherty B.A."/>
            <person name="Bott K.F."/>
            <person name="Hu P.-C."/>
            <person name="Lucier T.S."/>
            <person name="Peterson S.N."/>
            <person name="Smith H.O."/>
            <person name="Hutchison C.A. III"/>
            <person name="Venter J.C."/>
        </authorList>
    </citation>
    <scope>NUCLEOTIDE SEQUENCE [LARGE SCALE GENOMIC DNA]</scope>
    <source>
        <strain>ATCC 33530 / DSM 19775 / NCTC 10195 / G37</strain>
    </source>
</reference>
<name>Y260_MYCGE</name>
<feature type="signal peptide" evidence="1">
    <location>
        <begin position="1"/>
        <end position="22"/>
    </location>
</feature>
<feature type="chain" id="PRO_0000018724" description="Uncharacterized lipoprotein MG260">
    <location>
        <begin position="23"/>
        <end position="765"/>
    </location>
</feature>
<feature type="region of interest" description="Disordered" evidence="2">
    <location>
        <begin position="177"/>
        <end position="203"/>
    </location>
</feature>
<feature type="region of interest" description="Disordered" evidence="2">
    <location>
        <begin position="218"/>
        <end position="255"/>
    </location>
</feature>
<feature type="compositionally biased region" description="Polar residues" evidence="2">
    <location>
        <begin position="179"/>
        <end position="192"/>
    </location>
</feature>
<feature type="compositionally biased region" description="Low complexity" evidence="2">
    <location>
        <begin position="236"/>
        <end position="247"/>
    </location>
</feature>
<feature type="lipid moiety-binding region" description="N-palmitoyl cysteine" evidence="1">
    <location>
        <position position="23"/>
    </location>
</feature>
<feature type="lipid moiety-binding region" description="S-diacylglycerol cysteine" evidence="1">
    <location>
        <position position="23"/>
    </location>
</feature>